<keyword id="KW-0002">3D-structure</keyword>
<keyword id="KW-0024">Alternative initiation</keyword>
<keyword id="KW-1015">Disulfide bond</keyword>
<keyword id="KW-1048">Host nucleus</keyword>
<keyword id="KW-0945">Host-virus interaction</keyword>
<keyword id="KW-0677">Repeat</keyword>
<keyword id="KW-0964">Secreted</keyword>
<keyword id="KW-0732">Signal</keyword>
<keyword id="KW-0899">Viral immunoevasion</keyword>
<organism>
    <name type="scientific">Woodchuck hepatitis B virus (isolate 1)</name>
    <name type="common">WHV</name>
    <dbReference type="NCBI Taxonomy" id="10430"/>
    <lineage>
        <taxon>Viruses</taxon>
        <taxon>Riboviria</taxon>
        <taxon>Pararnavirae</taxon>
        <taxon>Artverviricota</taxon>
        <taxon>Revtraviricetes</taxon>
        <taxon>Blubervirales</taxon>
        <taxon>Hepadnaviridae</taxon>
        <taxon>Orthohepadnavirus</taxon>
        <taxon>Woodchuck hepatitis virus</taxon>
    </lineage>
</organism>
<comment type="function">
    <text evidence="2">May regulate immune response to the intracellular capsid in acting as a T-cell tolerogen, by having an immunoregulatory effect which prevents destruction of infected cells by cytotoxic T-cells. This immune regulation may predispose to chronicity during perinatal infections and prevent severe liver injury during adult infections.</text>
</comment>
<comment type="subunit">
    <text evidence="2">Homodimerizes.</text>
</comment>
<comment type="subcellular location">
    <subcellularLocation>
        <location evidence="2">Secreted</location>
    </subcellularLocation>
    <subcellularLocation>
        <location evidence="2">Host nucleus</location>
    </subcellularLocation>
</comment>
<comment type="alternative products">
    <event type="alternative initiation"/>
    <isoform>
        <id>P0C6J2-1</id>
        <name>External core antigen</name>
        <sequence type="displayed"/>
    </isoform>
    <isoform>
        <id>P69709-1</id>
        <name>Capsid protein</name>
        <sequence type="external"/>
    </isoform>
</comment>
<comment type="PTM">
    <text evidence="2">Phosphorylated.</text>
</comment>
<comment type="PTM">
    <text evidence="2">Cleaved by host furin.</text>
</comment>
<comment type="similarity">
    <text evidence="2">Belongs to the orthohepadnavirus precore antigen family.</text>
</comment>
<feature type="signal peptide" evidence="2">
    <location>
        <begin position="1"/>
        <end position="20"/>
    </location>
</feature>
<feature type="chain" id="PRO_0000324740" description="External core antigen" evidence="2">
    <location>
        <begin position="21"/>
        <end position="218"/>
    </location>
</feature>
<feature type="propeptide" id="PRO_0000324741" evidence="1">
    <location>
        <begin position="190"/>
        <end position="218"/>
    </location>
</feature>
<feature type="repeat" description="1; half-length">
    <location>
        <begin position="190"/>
        <end position="196"/>
    </location>
</feature>
<feature type="repeat" description="2">
    <location>
        <begin position="197"/>
        <end position="204"/>
    </location>
</feature>
<feature type="repeat" description="3">
    <location>
        <begin position="205"/>
        <end position="212"/>
    </location>
</feature>
<feature type="region of interest" description="HBEAG" evidence="2">
    <location>
        <begin position="26"/>
        <end position="28"/>
    </location>
</feature>
<feature type="region of interest" description="Disordered" evidence="3">
    <location>
        <begin position="180"/>
        <end position="218"/>
    </location>
</feature>
<feature type="region of interest" description="3 X 8 AA repeats of S-P-R-R-R-R-S-Q">
    <location>
        <begin position="190"/>
        <end position="212"/>
    </location>
</feature>
<feature type="compositionally biased region" description="Basic residues" evidence="3">
    <location>
        <begin position="180"/>
        <end position="211"/>
    </location>
</feature>
<feature type="site" description="Cleavage; by host" evidence="2">
    <location>
        <begin position="189"/>
        <end position="190"/>
    </location>
</feature>
<feature type="disulfide bond" description="Interchain" evidence="2">
    <location>
        <position position="78"/>
    </location>
</feature>
<feature type="disulfide bond" description="Interchain" evidence="2">
    <location>
        <position position="91"/>
    </location>
</feature>
<feature type="helix" evidence="4">
    <location>
        <begin position="37"/>
        <end position="39"/>
    </location>
</feature>
<feature type="helix" evidence="4">
    <location>
        <begin position="43"/>
        <end position="48"/>
    </location>
</feature>
<feature type="helix" evidence="4">
    <location>
        <begin position="51"/>
        <end position="53"/>
    </location>
</feature>
<feature type="helix" evidence="4">
    <location>
        <begin position="57"/>
        <end position="72"/>
    </location>
</feature>
<feature type="strand" evidence="4">
    <location>
        <begin position="74"/>
        <end position="76"/>
    </location>
</feature>
<feature type="helix" evidence="4">
    <location>
        <begin position="80"/>
        <end position="105"/>
    </location>
</feature>
<feature type="helix" evidence="4">
    <location>
        <begin position="109"/>
        <end position="121"/>
    </location>
</feature>
<feature type="helix" evidence="4">
    <location>
        <begin position="123"/>
        <end position="140"/>
    </location>
</feature>
<feature type="helix" evidence="4">
    <location>
        <begin position="142"/>
        <end position="157"/>
    </location>
</feature>
<feature type="turn" evidence="4">
    <location>
        <begin position="160"/>
        <end position="162"/>
    </location>
</feature>
<dbReference type="EMBL" id="J02442">
    <property type="status" value="NOT_ANNOTATED_CDS"/>
    <property type="molecule type" value="Genomic_DNA"/>
</dbReference>
<dbReference type="PDB" id="6ECS">
    <property type="method" value="X-ray"/>
    <property type="resolution" value="2.90 A"/>
    <property type="chains" value="A/B/C/D=31-179"/>
</dbReference>
<dbReference type="PDBsum" id="6ECS"/>
<dbReference type="SMR" id="P0C6J2"/>
<dbReference type="Proteomes" id="UP000007631">
    <property type="component" value="Genome"/>
</dbReference>
<dbReference type="GO" id="GO:0005576">
    <property type="term" value="C:extracellular region"/>
    <property type="evidence" value="ECO:0007669"/>
    <property type="project" value="UniProtKB-SubCell"/>
</dbReference>
<dbReference type="GO" id="GO:0043657">
    <property type="term" value="C:host cell"/>
    <property type="evidence" value="ECO:0007669"/>
    <property type="project" value="GOC"/>
</dbReference>
<dbReference type="GO" id="GO:0030430">
    <property type="term" value="C:host cell cytoplasm"/>
    <property type="evidence" value="ECO:0007669"/>
    <property type="project" value="UniProtKB-UniRule"/>
</dbReference>
<dbReference type="GO" id="GO:0042025">
    <property type="term" value="C:host cell nucleus"/>
    <property type="evidence" value="ECO:0007669"/>
    <property type="project" value="UniProtKB-SubCell"/>
</dbReference>
<dbReference type="GO" id="GO:0039619">
    <property type="term" value="C:T=4 icosahedral viral capsid"/>
    <property type="evidence" value="ECO:0007669"/>
    <property type="project" value="UniProtKB-UniRule"/>
</dbReference>
<dbReference type="GO" id="GO:0003677">
    <property type="term" value="F:DNA binding"/>
    <property type="evidence" value="ECO:0007669"/>
    <property type="project" value="UniProtKB-UniRule"/>
</dbReference>
<dbReference type="GO" id="GO:0003723">
    <property type="term" value="F:RNA binding"/>
    <property type="evidence" value="ECO:0007669"/>
    <property type="project" value="UniProtKB-UniRule"/>
</dbReference>
<dbReference type="GO" id="GO:0005198">
    <property type="term" value="F:structural molecule activity"/>
    <property type="evidence" value="ECO:0007669"/>
    <property type="project" value="UniProtKB-UniRule"/>
</dbReference>
<dbReference type="GO" id="GO:0075521">
    <property type="term" value="P:microtubule-dependent intracellular transport of viral material towards nucleus"/>
    <property type="evidence" value="ECO:0007669"/>
    <property type="project" value="UniProtKB-UniRule"/>
</dbReference>
<dbReference type="GO" id="GO:0046718">
    <property type="term" value="P:symbiont entry into host cell"/>
    <property type="evidence" value="ECO:0007669"/>
    <property type="project" value="UniProtKB-UniRule"/>
</dbReference>
<dbReference type="GO" id="GO:0075732">
    <property type="term" value="P:viral penetration into host nucleus"/>
    <property type="evidence" value="ECO:0007669"/>
    <property type="project" value="UniProtKB-UniRule"/>
</dbReference>
<dbReference type="Gene3D" id="1.10.4090.10">
    <property type="entry name" value="Viral capsid, core domain supefamily, Hepatitis B virus"/>
    <property type="match status" value="1"/>
</dbReference>
<dbReference type="HAMAP" id="MF_04076">
    <property type="entry name" value="HBV_HBEAG"/>
    <property type="match status" value="1"/>
</dbReference>
<dbReference type="InterPro" id="IPR013195">
    <property type="entry name" value="Hepatitis_B_virus_capsid_N"/>
</dbReference>
<dbReference type="InterPro" id="IPR002006">
    <property type="entry name" value="Hepatitis_core"/>
</dbReference>
<dbReference type="InterPro" id="IPR036459">
    <property type="entry name" value="Viral_capsid_core_dom_sf_HBV"/>
</dbReference>
<dbReference type="Pfam" id="PF08290">
    <property type="entry name" value="Hep_core_N"/>
    <property type="match status" value="1"/>
</dbReference>
<dbReference type="Pfam" id="PF00906">
    <property type="entry name" value="Hepatitis_core"/>
    <property type="match status" value="3"/>
</dbReference>
<dbReference type="SUPFAM" id="SSF47852">
    <property type="entry name" value="Hepatitis B viral capsid (hbcag)"/>
    <property type="match status" value="1"/>
</dbReference>
<name>HBEAG_WHV1</name>
<proteinExistence type="evidence at protein level"/>
<gene>
    <name evidence="2" type="primary">C</name>
</gene>
<organismHost>
    <name type="scientific">Marmota monax</name>
    <name type="common">Woodchuck</name>
    <dbReference type="NCBI Taxonomy" id="9995"/>
</organismHost>
<sequence>MYLFHLCLVFACVPCPTVQASKLCLGWLWGMDIDPYKEFGSSYQLLNFLPLDFFPDLNALVDTATALYEEELTGREHCSPHHTAIRQALVCWDELTKLIAWMSSNITSEQVRTIIVNHVNDTWGLKVRQSLWFHLSCLTFGQHTVQEFLVSFGVWIRTPAPYRPPNAPILSTLPEHTVIRRRGGARASRSPRRRTPSPRRRRSQSPRRRRSQSPSANC</sequence>
<reference key="1">
    <citation type="journal article" date="1982" name="J. Virol.">
        <title>Nucleotide sequence of a cloned woodchuck hepatitis virus genome: comparison with the hepatitis B virus sequence.</title>
        <authorList>
            <person name="Galibert F."/>
            <person name="Chen T.N."/>
            <person name="Mandart E."/>
        </authorList>
    </citation>
    <scope>NUCLEOTIDE SEQUENCE [GENOMIC DNA]</scope>
</reference>
<evidence type="ECO:0000250" key="1"/>
<evidence type="ECO:0000255" key="2">
    <source>
        <dbReference type="HAMAP-Rule" id="MF_04076"/>
    </source>
</evidence>
<evidence type="ECO:0000256" key="3">
    <source>
        <dbReference type="SAM" id="MobiDB-lite"/>
    </source>
</evidence>
<evidence type="ECO:0007829" key="4">
    <source>
        <dbReference type="PDB" id="6ECS"/>
    </source>
</evidence>
<protein>
    <recommendedName>
        <fullName evidence="2">External core antigen</fullName>
    </recommendedName>
    <alternativeName>
        <fullName evidence="2">HBeAg</fullName>
    </alternativeName>
    <alternativeName>
        <fullName evidence="2">Precore protein</fullName>
    </alternativeName>
    <alternativeName>
        <fullName evidence="2">p25</fullName>
    </alternativeName>
</protein>
<accession>P0C6J2</accession>